<accession>C6C0P0</accession>
<gene>
    <name evidence="1" type="primary">hslV</name>
    <name type="ordered locus">Desal_2935</name>
</gene>
<name>HSLV_MARSD</name>
<feature type="chain" id="PRO_1000204502" description="ATP-dependent protease subunit HslV">
    <location>
        <begin position="1"/>
        <end position="179"/>
    </location>
</feature>
<feature type="active site" evidence="1">
    <location>
        <position position="6"/>
    </location>
</feature>
<feature type="binding site" evidence="1">
    <location>
        <position position="162"/>
    </location>
    <ligand>
        <name>Na(+)</name>
        <dbReference type="ChEBI" id="CHEBI:29101"/>
    </ligand>
</feature>
<feature type="binding site" evidence="1">
    <location>
        <position position="165"/>
    </location>
    <ligand>
        <name>Na(+)</name>
        <dbReference type="ChEBI" id="CHEBI:29101"/>
    </ligand>
</feature>
<feature type="binding site" evidence="1">
    <location>
        <position position="168"/>
    </location>
    <ligand>
        <name>Na(+)</name>
        <dbReference type="ChEBI" id="CHEBI:29101"/>
    </ligand>
</feature>
<proteinExistence type="inferred from homology"/>
<keyword id="KW-0021">Allosteric enzyme</keyword>
<keyword id="KW-0963">Cytoplasm</keyword>
<keyword id="KW-0378">Hydrolase</keyword>
<keyword id="KW-0479">Metal-binding</keyword>
<keyword id="KW-0645">Protease</keyword>
<keyword id="KW-1185">Reference proteome</keyword>
<keyword id="KW-0915">Sodium</keyword>
<keyword id="KW-0888">Threonine protease</keyword>
<comment type="function">
    <text evidence="1">Protease subunit of a proteasome-like degradation complex believed to be a general protein degrading machinery.</text>
</comment>
<comment type="catalytic activity">
    <reaction evidence="1">
        <text>ATP-dependent cleavage of peptide bonds with broad specificity.</text>
        <dbReference type="EC" id="3.4.25.2"/>
    </reaction>
</comment>
<comment type="activity regulation">
    <text evidence="1">Allosterically activated by HslU binding.</text>
</comment>
<comment type="subunit">
    <text evidence="1">A double ring-shaped homohexamer of HslV is capped on each side by a ring-shaped HslU homohexamer. The assembly of the HslU/HslV complex is dependent on binding of ATP.</text>
</comment>
<comment type="subcellular location">
    <subcellularLocation>
        <location evidence="1">Cytoplasm</location>
    </subcellularLocation>
</comment>
<comment type="similarity">
    <text evidence="1">Belongs to the peptidase T1B family. HslV subfamily.</text>
</comment>
<reference key="1">
    <citation type="submission" date="2009-06" db="EMBL/GenBank/DDBJ databases">
        <title>Complete sequence of Desulfovibrio salexigens DSM 2638.</title>
        <authorList>
            <consortium name="US DOE Joint Genome Institute"/>
            <person name="Lucas S."/>
            <person name="Copeland A."/>
            <person name="Lapidus A."/>
            <person name="Glavina del Rio T."/>
            <person name="Tice H."/>
            <person name="Bruce D."/>
            <person name="Goodwin L."/>
            <person name="Pitluck S."/>
            <person name="Munk A.C."/>
            <person name="Brettin T."/>
            <person name="Detter J.C."/>
            <person name="Han C."/>
            <person name="Tapia R."/>
            <person name="Larimer F."/>
            <person name="Land M."/>
            <person name="Hauser L."/>
            <person name="Kyrpides N."/>
            <person name="Anderson I."/>
            <person name="Wall J.D."/>
            <person name="Arkin A.P."/>
            <person name="Dehal P."/>
            <person name="Chivian D."/>
            <person name="Giles B."/>
            <person name="Hazen T.C."/>
        </authorList>
    </citation>
    <scope>NUCLEOTIDE SEQUENCE [LARGE SCALE GENOMIC DNA]</scope>
    <source>
        <strain>ATCC 14822 / DSM 2638 / NCIMB 8403 / VKM B-1763</strain>
    </source>
</reference>
<evidence type="ECO:0000255" key="1">
    <source>
        <dbReference type="HAMAP-Rule" id="MF_00248"/>
    </source>
</evidence>
<organism>
    <name type="scientific">Maridesulfovibrio salexigens (strain ATCC 14822 / DSM 2638 / NCIMB 8403 / VKM B-1763)</name>
    <name type="common">Desulfovibrio salexigens</name>
    <dbReference type="NCBI Taxonomy" id="526222"/>
    <lineage>
        <taxon>Bacteria</taxon>
        <taxon>Pseudomonadati</taxon>
        <taxon>Thermodesulfobacteriota</taxon>
        <taxon>Desulfovibrionia</taxon>
        <taxon>Desulfovibrionales</taxon>
        <taxon>Desulfovibrionaceae</taxon>
        <taxon>Maridesulfovibrio</taxon>
    </lineage>
</organism>
<sequence>MEMRGTTILAVKDDKGTAMIGDGQVTMGQAVVMKHSAVKVRTLYNDQVIAGFAGATADAFTLFERFEKKLKTYSGNLVRSAVEMATDWRTDKFLRKLEAMIMVADAEHILIISGNGDVIEPDDGVAAIGSGGSYALSAARALMRNTDMPAADIAQKSMEIASEICVYTNDHFVLKTLEK</sequence>
<dbReference type="EC" id="3.4.25.2" evidence="1"/>
<dbReference type="EMBL" id="CP001649">
    <property type="protein sequence ID" value="ACS80987.1"/>
    <property type="molecule type" value="Genomic_DNA"/>
</dbReference>
<dbReference type="RefSeq" id="WP_015852803.1">
    <property type="nucleotide sequence ID" value="NC_012881.1"/>
</dbReference>
<dbReference type="SMR" id="C6C0P0"/>
<dbReference type="STRING" id="526222.Desal_2935"/>
<dbReference type="MEROPS" id="T01.007"/>
<dbReference type="KEGG" id="dsa:Desal_2935"/>
<dbReference type="eggNOG" id="COG5405">
    <property type="taxonomic scope" value="Bacteria"/>
</dbReference>
<dbReference type="HOGENOM" id="CLU_093872_1_0_7"/>
<dbReference type="OrthoDB" id="9804884at2"/>
<dbReference type="Proteomes" id="UP000002601">
    <property type="component" value="Chromosome"/>
</dbReference>
<dbReference type="GO" id="GO:0009376">
    <property type="term" value="C:HslUV protease complex"/>
    <property type="evidence" value="ECO:0007669"/>
    <property type="project" value="UniProtKB-UniRule"/>
</dbReference>
<dbReference type="GO" id="GO:0005839">
    <property type="term" value="C:proteasome core complex"/>
    <property type="evidence" value="ECO:0007669"/>
    <property type="project" value="InterPro"/>
</dbReference>
<dbReference type="GO" id="GO:0046872">
    <property type="term" value="F:metal ion binding"/>
    <property type="evidence" value="ECO:0007669"/>
    <property type="project" value="UniProtKB-KW"/>
</dbReference>
<dbReference type="GO" id="GO:0004298">
    <property type="term" value="F:threonine-type endopeptidase activity"/>
    <property type="evidence" value="ECO:0007669"/>
    <property type="project" value="UniProtKB-KW"/>
</dbReference>
<dbReference type="GO" id="GO:0051603">
    <property type="term" value="P:proteolysis involved in protein catabolic process"/>
    <property type="evidence" value="ECO:0007669"/>
    <property type="project" value="InterPro"/>
</dbReference>
<dbReference type="CDD" id="cd01913">
    <property type="entry name" value="protease_HslV"/>
    <property type="match status" value="1"/>
</dbReference>
<dbReference type="Gene3D" id="3.60.20.10">
    <property type="entry name" value="Glutamine Phosphoribosylpyrophosphate, subunit 1, domain 1"/>
    <property type="match status" value="1"/>
</dbReference>
<dbReference type="HAMAP" id="MF_00248">
    <property type="entry name" value="HslV"/>
    <property type="match status" value="1"/>
</dbReference>
<dbReference type="InterPro" id="IPR022281">
    <property type="entry name" value="ATP-dep_Prtase_HsIV_su"/>
</dbReference>
<dbReference type="InterPro" id="IPR029055">
    <property type="entry name" value="Ntn_hydrolases_N"/>
</dbReference>
<dbReference type="InterPro" id="IPR001353">
    <property type="entry name" value="Proteasome_sua/b"/>
</dbReference>
<dbReference type="InterPro" id="IPR023333">
    <property type="entry name" value="Proteasome_suB-type"/>
</dbReference>
<dbReference type="NCBIfam" id="TIGR03692">
    <property type="entry name" value="ATP_dep_HslV"/>
    <property type="match status" value="1"/>
</dbReference>
<dbReference type="NCBIfam" id="NF003964">
    <property type="entry name" value="PRK05456.1"/>
    <property type="match status" value="1"/>
</dbReference>
<dbReference type="PANTHER" id="PTHR32194:SF0">
    <property type="entry name" value="ATP-DEPENDENT PROTEASE SUBUNIT HSLV"/>
    <property type="match status" value="1"/>
</dbReference>
<dbReference type="PANTHER" id="PTHR32194">
    <property type="entry name" value="METALLOPROTEASE TLDD"/>
    <property type="match status" value="1"/>
</dbReference>
<dbReference type="Pfam" id="PF00227">
    <property type="entry name" value="Proteasome"/>
    <property type="match status" value="1"/>
</dbReference>
<dbReference type="PIRSF" id="PIRSF039093">
    <property type="entry name" value="HslV"/>
    <property type="match status" value="1"/>
</dbReference>
<dbReference type="SUPFAM" id="SSF56235">
    <property type="entry name" value="N-terminal nucleophile aminohydrolases (Ntn hydrolases)"/>
    <property type="match status" value="1"/>
</dbReference>
<dbReference type="PROSITE" id="PS51476">
    <property type="entry name" value="PROTEASOME_BETA_2"/>
    <property type="match status" value="1"/>
</dbReference>
<protein>
    <recommendedName>
        <fullName evidence="1">ATP-dependent protease subunit HslV</fullName>
        <ecNumber evidence="1">3.4.25.2</ecNumber>
    </recommendedName>
</protein>